<name>SYFA_SYNFM</name>
<reference key="1">
    <citation type="submission" date="2006-10" db="EMBL/GenBank/DDBJ databases">
        <title>Complete sequence of Syntrophobacter fumaroxidans MPOB.</title>
        <authorList>
            <consortium name="US DOE Joint Genome Institute"/>
            <person name="Copeland A."/>
            <person name="Lucas S."/>
            <person name="Lapidus A."/>
            <person name="Barry K."/>
            <person name="Detter J.C."/>
            <person name="Glavina del Rio T."/>
            <person name="Hammon N."/>
            <person name="Israni S."/>
            <person name="Pitluck S."/>
            <person name="Goltsman E.G."/>
            <person name="Martinez M."/>
            <person name="Schmutz J."/>
            <person name="Larimer F."/>
            <person name="Land M."/>
            <person name="Hauser L."/>
            <person name="Kyrpides N."/>
            <person name="Kim E."/>
            <person name="Boone D.R."/>
            <person name="Brockman F."/>
            <person name="Culley D."/>
            <person name="Ferry J."/>
            <person name="Gunsalus R."/>
            <person name="McInerney M.J."/>
            <person name="Morrison M."/>
            <person name="Plugge C."/>
            <person name="Rohlin L."/>
            <person name="Scholten J."/>
            <person name="Sieber J."/>
            <person name="Stams A.J.M."/>
            <person name="Worm P."/>
            <person name="Henstra A.M."/>
            <person name="Richardson P."/>
        </authorList>
    </citation>
    <scope>NUCLEOTIDE SEQUENCE [LARGE SCALE GENOMIC DNA]</scope>
    <source>
        <strain>DSM 10017 / MPOB</strain>
    </source>
</reference>
<organism>
    <name type="scientific">Syntrophobacter fumaroxidans (strain DSM 10017 / MPOB)</name>
    <dbReference type="NCBI Taxonomy" id="335543"/>
    <lineage>
        <taxon>Bacteria</taxon>
        <taxon>Pseudomonadati</taxon>
        <taxon>Thermodesulfobacteriota</taxon>
        <taxon>Syntrophobacteria</taxon>
        <taxon>Syntrophobacterales</taxon>
        <taxon>Syntrophobacteraceae</taxon>
        <taxon>Syntrophobacter</taxon>
    </lineage>
</organism>
<sequence length="336" mass="38215">MEDAVRKLLNSADHEVLALANDARAIEQLKVRFLGRKGELARLFKEMGKVPEAERPAVGKVLNEAKVRLEALFAEALERGGEQGAGRREQIDITVPGRRPPRGRLHPISQVAREVCRIFNWLGFEIVEGPEVELDYYNFEALNIPRDHPARDMQDTFYVSDDVVLRTHTSPLQVRTMEKRRPPIRVIAPGKTYRCDSDVTHTPMFHQVEGLMVGKDISFGDLKGILTIFVHQMFGADVGLRFRPSFFPFTEPSAEVDIQCVMCKGEGCRVCSQTGWLEILGSGMVDPEVFRMVGYDPEEVTGFAFGMGIERITMLKYGIDDLRLFFENDFRFLRQF</sequence>
<keyword id="KW-0030">Aminoacyl-tRNA synthetase</keyword>
<keyword id="KW-0067">ATP-binding</keyword>
<keyword id="KW-0963">Cytoplasm</keyword>
<keyword id="KW-0436">Ligase</keyword>
<keyword id="KW-0460">Magnesium</keyword>
<keyword id="KW-0479">Metal-binding</keyword>
<keyword id="KW-0547">Nucleotide-binding</keyword>
<keyword id="KW-0648">Protein biosynthesis</keyword>
<keyword id="KW-1185">Reference proteome</keyword>
<feature type="chain" id="PRO_1000078855" description="Phenylalanine--tRNA ligase alpha subunit">
    <location>
        <begin position="1"/>
        <end position="336"/>
    </location>
</feature>
<feature type="binding site" evidence="1">
    <location>
        <position position="251"/>
    </location>
    <ligand>
        <name>Mg(2+)</name>
        <dbReference type="ChEBI" id="CHEBI:18420"/>
        <note>shared with beta subunit</note>
    </ligand>
</feature>
<comment type="catalytic activity">
    <reaction evidence="1">
        <text>tRNA(Phe) + L-phenylalanine + ATP = L-phenylalanyl-tRNA(Phe) + AMP + diphosphate + H(+)</text>
        <dbReference type="Rhea" id="RHEA:19413"/>
        <dbReference type="Rhea" id="RHEA-COMP:9668"/>
        <dbReference type="Rhea" id="RHEA-COMP:9699"/>
        <dbReference type="ChEBI" id="CHEBI:15378"/>
        <dbReference type="ChEBI" id="CHEBI:30616"/>
        <dbReference type="ChEBI" id="CHEBI:33019"/>
        <dbReference type="ChEBI" id="CHEBI:58095"/>
        <dbReference type="ChEBI" id="CHEBI:78442"/>
        <dbReference type="ChEBI" id="CHEBI:78531"/>
        <dbReference type="ChEBI" id="CHEBI:456215"/>
        <dbReference type="EC" id="6.1.1.20"/>
    </reaction>
</comment>
<comment type="cofactor">
    <cofactor evidence="1">
        <name>Mg(2+)</name>
        <dbReference type="ChEBI" id="CHEBI:18420"/>
    </cofactor>
    <text evidence="1">Binds 2 magnesium ions per tetramer.</text>
</comment>
<comment type="subunit">
    <text evidence="1">Tetramer of two alpha and two beta subunits.</text>
</comment>
<comment type="subcellular location">
    <subcellularLocation>
        <location evidence="1">Cytoplasm</location>
    </subcellularLocation>
</comment>
<comment type="similarity">
    <text evidence="1">Belongs to the class-II aminoacyl-tRNA synthetase family. Phe-tRNA synthetase alpha subunit type 1 subfamily.</text>
</comment>
<proteinExistence type="inferred from homology"/>
<gene>
    <name evidence="1" type="primary">pheS</name>
    <name type="ordered locus">Sfum_0428</name>
</gene>
<protein>
    <recommendedName>
        <fullName evidence="1">Phenylalanine--tRNA ligase alpha subunit</fullName>
        <ecNumber evidence="1">6.1.1.20</ecNumber>
    </recommendedName>
    <alternativeName>
        <fullName evidence="1">Phenylalanyl-tRNA synthetase alpha subunit</fullName>
        <shortName evidence="1">PheRS</shortName>
    </alternativeName>
</protein>
<accession>A0LFC6</accession>
<dbReference type="EC" id="6.1.1.20" evidence="1"/>
<dbReference type="EMBL" id="CP000478">
    <property type="protein sequence ID" value="ABK16128.1"/>
    <property type="molecule type" value="Genomic_DNA"/>
</dbReference>
<dbReference type="RefSeq" id="WP_011697301.1">
    <property type="nucleotide sequence ID" value="NC_008554.1"/>
</dbReference>
<dbReference type="SMR" id="A0LFC6"/>
<dbReference type="FunCoup" id="A0LFC6">
    <property type="interactions" value="535"/>
</dbReference>
<dbReference type="STRING" id="335543.Sfum_0428"/>
<dbReference type="KEGG" id="sfu:Sfum_0428"/>
<dbReference type="eggNOG" id="COG0016">
    <property type="taxonomic scope" value="Bacteria"/>
</dbReference>
<dbReference type="HOGENOM" id="CLU_025086_0_1_7"/>
<dbReference type="InParanoid" id="A0LFC6"/>
<dbReference type="OrthoDB" id="9800719at2"/>
<dbReference type="Proteomes" id="UP000001784">
    <property type="component" value="Chromosome"/>
</dbReference>
<dbReference type="GO" id="GO:0005737">
    <property type="term" value="C:cytoplasm"/>
    <property type="evidence" value="ECO:0007669"/>
    <property type="project" value="UniProtKB-SubCell"/>
</dbReference>
<dbReference type="GO" id="GO:0005524">
    <property type="term" value="F:ATP binding"/>
    <property type="evidence" value="ECO:0007669"/>
    <property type="project" value="UniProtKB-UniRule"/>
</dbReference>
<dbReference type="GO" id="GO:0000287">
    <property type="term" value="F:magnesium ion binding"/>
    <property type="evidence" value="ECO:0007669"/>
    <property type="project" value="UniProtKB-UniRule"/>
</dbReference>
<dbReference type="GO" id="GO:0004826">
    <property type="term" value="F:phenylalanine-tRNA ligase activity"/>
    <property type="evidence" value="ECO:0007669"/>
    <property type="project" value="UniProtKB-UniRule"/>
</dbReference>
<dbReference type="GO" id="GO:0000049">
    <property type="term" value="F:tRNA binding"/>
    <property type="evidence" value="ECO:0007669"/>
    <property type="project" value="InterPro"/>
</dbReference>
<dbReference type="GO" id="GO:0006432">
    <property type="term" value="P:phenylalanyl-tRNA aminoacylation"/>
    <property type="evidence" value="ECO:0007669"/>
    <property type="project" value="UniProtKB-UniRule"/>
</dbReference>
<dbReference type="CDD" id="cd00496">
    <property type="entry name" value="PheRS_alpha_core"/>
    <property type="match status" value="1"/>
</dbReference>
<dbReference type="FunFam" id="3.30.930.10:FF:000003">
    <property type="entry name" value="Phenylalanine--tRNA ligase alpha subunit"/>
    <property type="match status" value="1"/>
</dbReference>
<dbReference type="Gene3D" id="3.30.930.10">
    <property type="entry name" value="Bira Bifunctional Protein, Domain 2"/>
    <property type="match status" value="1"/>
</dbReference>
<dbReference type="HAMAP" id="MF_00281">
    <property type="entry name" value="Phe_tRNA_synth_alpha1"/>
    <property type="match status" value="1"/>
</dbReference>
<dbReference type="InterPro" id="IPR006195">
    <property type="entry name" value="aa-tRNA-synth_II"/>
</dbReference>
<dbReference type="InterPro" id="IPR045864">
    <property type="entry name" value="aa-tRNA-synth_II/BPL/LPL"/>
</dbReference>
<dbReference type="InterPro" id="IPR004529">
    <property type="entry name" value="Phe-tRNA-synth_IIc_asu"/>
</dbReference>
<dbReference type="InterPro" id="IPR004188">
    <property type="entry name" value="Phe-tRNA_ligase_II_N"/>
</dbReference>
<dbReference type="InterPro" id="IPR022911">
    <property type="entry name" value="Phe_tRNA_ligase_alpha1_bac"/>
</dbReference>
<dbReference type="InterPro" id="IPR002319">
    <property type="entry name" value="Phenylalanyl-tRNA_Synthase"/>
</dbReference>
<dbReference type="InterPro" id="IPR010978">
    <property type="entry name" value="tRNA-bd_arm"/>
</dbReference>
<dbReference type="NCBIfam" id="TIGR00468">
    <property type="entry name" value="pheS"/>
    <property type="match status" value="1"/>
</dbReference>
<dbReference type="PANTHER" id="PTHR11538:SF41">
    <property type="entry name" value="PHENYLALANINE--TRNA LIGASE, MITOCHONDRIAL"/>
    <property type="match status" value="1"/>
</dbReference>
<dbReference type="PANTHER" id="PTHR11538">
    <property type="entry name" value="PHENYLALANYL-TRNA SYNTHETASE"/>
    <property type="match status" value="1"/>
</dbReference>
<dbReference type="Pfam" id="PF02912">
    <property type="entry name" value="Phe_tRNA-synt_N"/>
    <property type="match status" value="1"/>
</dbReference>
<dbReference type="Pfam" id="PF01409">
    <property type="entry name" value="tRNA-synt_2d"/>
    <property type="match status" value="1"/>
</dbReference>
<dbReference type="SUPFAM" id="SSF55681">
    <property type="entry name" value="Class II aaRS and biotin synthetases"/>
    <property type="match status" value="1"/>
</dbReference>
<dbReference type="SUPFAM" id="SSF46589">
    <property type="entry name" value="tRNA-binding arm"/>
    <property type="match status" value="1"/>
</dbReference>
<dbReference type="PROSITE" id="PS50862">
    <property type="entry name" value="AA_TRNA_LIGASE_II"/>
    <property type="match status" value="1"/>
</dbReference>
<evidence type="ECO:0000255" key="1">
    <source>
        <dbReference type="HAMAP-Rule" id="MF_00281"/>
    </source>
</evidence>